<keyword id="KW-0007">Acetylation</keyword>
<keyword id="KW-0158">Chromosome</keyword>
<keyword id="KW-0238">DNA-binding</keyword>
<keyword id="KW-0488">Methylation</keyword>
<keyword id="KW-0544">Nucleosome core</keyword>
<keyword id="KW-0539">Nucleus</keyword>
<keyword id="KW-0597">Phosphoprotein</keyword>
<keyword id="KW-1185">Reference proteome</keyword>
<feature type="initiator methionine" description="Removed" evidence="1">
    <location>
        <position position="1"/>
    </location>
</feature>
<feature type="chain" id="PRO_0000297742" description="Histone H3">
    <location>
        <begin position="2"/>
        <end position="136"/>
    </location>
</feature>
<feature type="region of interest" description="Disordered" evidence="2">
    <location>
        <begin position="1"/>
        <end position="43"/>
    </location>
</feature>
<feature type="modified residue" description="N6,N6,N6-trimethyllysine; alternate" evidence="1">
    <location>
        <position position="5"/>
    </location>
</feature>
<feature type="modified residue" description="N6,N6-dimethyllysine; alternate" evidence="1">
    <location>
        <position position="5"/>
    </location>
</feature>
<feature type="modified residue" description="N6-methyllysine; alternate" evidence="1">
    <location>
        <position position="5"/>
    </location>
</feature>
<feature type="modified residue" description="N6-acetyllysine; alternate" evidence="1">
    <location>
        <position position="10"/>
    </location>
</feature>
<feature type="modified residue" description="N6-methyllysine; alternate" evidence="1">
    <location>
        <position position="10"/>
    </location>
</feature>
<feature type="modified residue" description="Phosphoserine" evidence="1">
    <location>
        <position position="11"/>
    </location>
</feature>
<feature type="modified residue" description="N6,N6-dimethyllysine; alternate" evidence="1">
    <location>
        <position position="15"/>
    </location>
</feature>
<feature type="modified residue" description="N6-acetyllysine; alternate" evidence="1">
    <location>
        <position position="15"/>
    </location>
</feature>
<feature type="modified residue" description="N6-acetyllysine; alternate" evidence="1">
    <location>
        <position position="19"/>
    </location>
</feature>
<feature type="modified residue" description="N6-methyllysine; alternate" evidence="1">
    <location>
        <position position="19"/>
    </location>
</feature>
<feature type="modified residue" description="N6-acetyllysine; alternate" evidence="1">
    <location>
        <position position="24"/>
    </location>
</feature>
<feature type="modified residue" description="N6-methyllysine; alternate" evidence="1">
    <location>
        <position position="24"/>
    </location>
</feature>
<feature type="modified residue" description="N6,N6,N6-trimethyllysine; alternate" evidence="1">
    <location>
        <position position="28"/>
    </location>
</feature>
<feature type="modified residue" description="N6,N6-dimethyllysine; alternate" evidence="1">
    <location>
        <position position="28"/>
    </location>
</feature>
<feature type="modified residue" description="N6-acetyllysine; alternate" evidence="1">
    <location>
        <position position="28"/>
    </location>
</feature>
<feature type="modified residue" description="N6-methyllysine; alternate" evidence="1">
    <location>
        <position position="28"/>
    </location>
</feature>
<feature type="modified residue" description="N6,N6,N6-trimethyllysine; alternate" evidence="1">
    <location>
        <position position="37"/>
    </location>
</feature>
<feature type="modified residue" description="N6,N6-dimethyllysine; alternate" evidence="1">
    <location>
        <position position="37"/>
    </location>
</feature>
<feature type="modified residue" description="N6-acetyllysine; alternate" evidence="1">
    <location>
        <position position="37"/>
    </location>
</feature>
<feature type="modified residue" description="N6-methyllysine; alternate" evidence="1">
    <location>
        <position position="37"/>
    </location>
</feature>
<feature type="modified residue" description="N6-acetyllysine" evidence="1">
    <location>
        <position position="57"/>
    </location>
</feature>
<feature type="modified residue" description="N6-acetyllysine" evidence="1">
    <location>
        <position position="65"/>
    </location>
</feature>
<feature type="modified residue" description="N6,N6,N6-trimethyllysine; alternate" evidence="1">
    <location>
        <position position="80"/>
    </location>
</feature>
<feature type="modified residue" description="N6,N6-dimethyllysine; alternate" evidence="1">
    <location>
        <position position="80"/>
    </location>
</feature>
<feature type="modified residue" description="N6-methyllysine; alternate" evidence="1">
    <location>
        <position position="80"/>
    </location>
</feature>
<protein>
    <recommendedName>
        <fullName>Histone H3</fullName>
    </recommendedName>
</protein>
<comment type="function">
    <text>Core component of nucleosome. Nucleosomes wrap and compact DNA into chromatin, limiting DNA accessibility to the cellular machineries which require DNA as a template. Histones thereby play a central role in transcription regulation, DNA repair, DNA replication and chromosomal stability. DNA accessibility is regulated via a complex set of post-translational modifications of histones, also called histone code, and nucleosome remodeling.</text>
</comment>
<comment type="subunit">
    <text>The nucleosome is a histone octamer containing two molecules each of H2A, H2B, H3 and H4 assembled in one H3-H4 heterotetramer and two H2A-H2B heterodimers. The octamer wraps approximately 147 bp of DNA.</text>
</comment>
<comment type="subcellular location">
    <subcellularLocation>
        <location evidence="1">Nucleus</location>
    </subcellularLocation>
    <subcellularLocation>
        <location evidence="1">Chromosome</location>
    </subcellularLocation>
</comment>
<comment type="PTM">
    <text evidence="1">Phosphorylated to form H3S10ph. H3S10ph promotes subsequent H3K14ac formation and is required for transcriptional activation through TBP recruitment to the promoters (By similarity).</text>
</comment>
<comment type="PTM">
    <text evidence="1">Mono-, di- and trimethylated by the COMPASS complex to form H3K4me1/2/3. H3K4me activates gene expression by regulating transcription elongation and plays a role in telomere length maintenance. H3K4me enrichment correlates with transcription levels, and occurs in a 5' to 3' gradient with H3K4me3 enrichment at the 5'-end of genes, shifting to H3K4me2 and then H3K4me1. Methylated by set2 to form H3K36me. H3K36me represses gene expression. Methylated by dot1 to form H3K79me. H3K79me is required for association of SIR proteins with telomeric regions and for telomeric silencing. The COMPASS-mediated formation of H3K4me2/3 and the dot1-mediated formation of H3K79me require H2BK123ub1 (By similarity).</text>
</comment>
<comment type="PTM">
    <text evidence="1">Acetylation of histone H3 leads to transcriptional activation. H3K14ac formation by gcn5 is promoted by H3S10ph. H3K14ac can also be formed by esa1. H3K56ac formation occurs predominantly in newly synthesized H3 molecules during G1, S and G2/M of the cell cycle and may be involved in DNA repair (By similarity).</text>
</comment>
<comment type="similarity">
    <text evidence="3">Belongs to the histone H3 family.</text>
</comment>
<comment type="caution">
    <text evidence="3">To ensure consistency between histone entries, we follow the 'Brno' nomenclature for histone modifications, with positions referring to those used in the literature for the 'closest' model organism. Due to slight variations in histone sequences between organisms and to the presence of initiator methionine in UniProtKB/Swiss-Prot sequences, the actual positions of modified amino acids in the sequence generally differ. In this entry the following conventions are used: H3K4me1/2/3 = mono-, di- and trimethylated Lys-5; H3K9ac = acetylated Lys-10; H3K9me1 = monomethylated Lys-10; H3S10ph = phosphorylated Ser-11; H3K14ac = acetylated Lys-15; H3K14me2 = dimethylated Lys-15; H3K18ac = acetylated Lys-19; H3K18me1 = monomethylated Lys-19; H3K23ac = acetylated Lys-24; H3K23me1 = monomethylated Lys-24; H3K27ac = acetylated Lys-28; H3K27me1/2/3 = mono-, di- and trimethylated Lys-28; H3K36ac = acetylated Lys-37; H3K36me1/2/3 = mono-, di- and trimethylated Lys-37; H3K56ac = acetylated Lys-57; H3K64ac = acetylated Lys-65; H3K79me1/2/3 = mono-, di- and trimethylated Lys-80.</text>
</comment>
<gene>
    <name type="primary">hht1</name>
    <name type="ORF">ACLA_021650</name>
</gene>
<evidence type="ECO:0000250" key="1"/>
<evidence type="ECO:0000256" key="2">
    <source>
        <dbReference type="SAM" id="MobiDB-lite"/>
    </source>
</evidence>
<evidence type="ECO:0000305" key="3"/>
<reference key="1">
    <citation type="journal article" date="2008" name="PLoS Genet.">
        <title>Genomic islands in the pathogenic filamentous fungus Aspergillus fumigatus.</title>
        <authorList>
            <person name="Fedorova N.D."/>
            <person name="Khaldi N."/>
            <person name="Joardar V.S."/>
            <person name="Maiti R."/>
            <person name="Amedeo P."/>
            <person name="Anderson M.J."/>
            <person name="Crabtree J."/>
            <person name="Silva J.C."/>
            <person name="Badger J.H."/>
            <person name="Albarraq A."/>
            <person name="Angiuoli S."/>
            <person name="Bussey H."/>
            <person name="Bowyer P."/>
            <person name="Cotty P.J."/>
            <person name="Dyer P.S."/>
            <person name="Egan A."/>
            <person name="Galens K."/>
            <person name="Fraser-Liggett C.M."/>
            <person name="Haas B.J."/>
            <person name="Inman J.M."/>
            <person name="Kent R."/>
            <person name="Lemieux S."/>
            <person name="Malavazi I."/>
            <person name="Orvis J."/>
            <person name="Roemer T."/>
            <person name="Ronning C.M."/>
            <person name="Sundaram J.P."/>
            <person name="Sutton G."/>
            <person name="Turner G."/>
            <person name="Venter J.C."/>
            <person name="White O.R."/>
            <person name="Whitty B.R."/>
            <person name="Youngman P."/>
            <person name="Wolfe K.H."/>
            <person name="Goldman G.H."/>
            <person name="Wortman J.R."/>
            <person name="Jiang B."/>
            <person name="Denning D.W."/>
            <person name="Nierman W.C."/>
        </authorList>
    </citation>
    <scope>NUCLEOTIDE SEQUENCE [LARGE SCALE GENOMIC DNA]</scope>
    <source>
        <strain>ATCC 1007 / CBS 513.65 / DSM 816 / NCTC 3887 / NRRL 1 / QM 1276 / 107</strain>
    </source>
</reference>
<proteinExistence type="inferred from homology"/>
<accession>A1CP80</accession>
<organism>
    <name type="scientific">Aspergillus clavatus (strain ATCC 1007 / CBS 513.65 / DSM 816 / NCTC 3887 / NRRL 1 / QM 1276 / 107)</name>
    <dbReference type="NCBI Taxonomy" id="344612"/>
    <lineage>
        <taxon>Eukaryota</taxon>
        <taxon>Fungi</taxon>
        <taxon>Dikarya</taxon>
        <taxon>Ascomycota</taxon>
        <taxon>Pezizomycotina</taxon>
        <taxon>Eurotiomycetes</taxon>
        <taxon>Eurotiomycetidae</taxon>
        <taxon>Eurotiales</taxon>
        <taxon>Aspergillaceae</taxon>
        <taxon>Aspergillus</taxon>
        <taxon>Aspergillus subgen. Fumigati</taxon>
    </lineage>
</organism>
<sequence length="136" mass="15333">MARTKQTARKSTGGKAPRKQLASKAARKAAPSTGGVKKPHRYKPGTVALREIRRYQKSTELLIRKLPFQRLVREIAQDFKSDLRFQSSAIGALQESVEAYLVSLFEDTNLCAIHAKRVTIQSKDIQLARRLRGERS</sequence>
<name>H3_ASPCL</name>
<dbReference type="EMBL" id="DS027059">
    <property type="protein sequence ID" value="EAW07451.1"/>
    <property type="molecule type" value="Genomic_DNA"/>
</dbReference>
<dbReference type="RefSeq" id="XP_001268877.1">
    <property type="nucleotide sequence ID" value="XM_001268876.1"/>
</dbReference>
<dbReference type="BMRB" id="A1CP80"/>
<dbReference type="SMR" id="A1CP80"/>
<dbReference type="STRING" id="344612.A1CP80"/>
<dbReference type="EnsemblFungi" id="EAW07451">
    <property type="protein sequence ID" value="EAW07451"/>
    <property type="gene ID" value="ACLA_021650"/>
</dbReference>
<dbReference type="GeneID" id="4701152"/>
<dbReference type="KEGG" id="act:ACLA_021650"/>
<dbReference type="VEuPathDB" id="FungiDB:ACLA_021650"/>
<dbReference type="eggNOG" id="KOG1745">
    <property type="taxonomic scope" value="Eukaryota"/>
</dbReference>
<dbReference type="HOGENOM" id="CLU_078295_4_0_1"/>
<dbReference type="OMA" id="HIFAEMA"/>
<dbReference type="OrthoDB" id="842664at2759"/>
<dbReference type="Proteomes" id="UP000006701">
    <property type="component" value="Unassembled WGS sequence"/>
</dbReference>
<dbReference type="GO" id="GO:0000786">
    <property type="term" value="C:nucleosome"/>
    <property type="evidence" value="ECO:0007669"/>
    <property type="project" value="UniProtKB-KW"/>
</dbReference>
<dbReference type="GO" id="GO:0005634">
    <property type="term" value="C:nucleus"/>
    <property type="evidence" value="ECO:0007669"/>
    <property type="project" value="UniProtKB-SubCell"/>
</dbReference>
<dbReference type="GO" id="GO:0003677">
    <property type="term" value="F:DNA binding"/>
    <property type="evidence" value="ECO:0007669"/>
    <property type="project" value="UniProtKB-KW"/>
</dbReference>
<dbReference type="GO" id="GO:0046982">
    <property type="term" value="F:protein heterodimerization activity"/>
    <property type="evidence" value="ECO:0007669"/>
    <property type="project" value="InterPro"/>
</dbReference>
<dbReference type="GO" id="GO:0030527">
    <property type="term" value="F:structural constituent of chromatin"/>
    <property type="evidence" value="ECO:0007669"/>
    <property type="project" value="InterPro"/>
</dbReference>
<dbReference type="CDD" id="cd22911">
    <property type="entry name" value="HFD_H3"/>
    <property type="match status" value="1"/>
</dbReference>
<dbReference type="FunFam" id="1.10.20.10:FF:000010">
    <property type="entry name" value="Histone H3"/>
    <property type="match status" value="1"/>
</dbReference>
<dbReference type="Gene3D" id="1.10.20.10">
    <property type="entry name" value="Histone, subunit A"/>
    <property type="match status" value="1"/>
</dbReference>
<dbReference type="InterPro" id="IPR009072">
    <property type="entry name" value="Histone-fold"/>
</dbReference>
<dbReference type="InterPro" id="IPR007125">
    <property type="entry name" value="Histone_H2A/H2B/H3"/>
</dbReference>
<dbReference type="InterPro" id="IPR000164">
    <property type="entry name" value="Histone_H3/CENP-A"/>
</dbReference>
<dbReference type="PANTHER" id="PTHR11426">
    <property type="entry name" value="HISTONE H3"/>
    <property type="match status" value="1"/>
</dbReference>
<dbReference type="Pfam" id="PF00125">
    <property type="entry name" value="Histone"/>
    <property type="match status" value="1"/>
</dbReference>
<dbReference type="PRINTS" id="PR00622">
    <property type="entry name" value="HISTONEH3"/>
</dbReference>
<dbReference type="SMART" id="SM00428">
    <property type="entry name" value="H3"/>
    <property type="match status" value="1"/>
</dbReference>
<dbReference type="SUPFAM" id="SSF47113">
    <property type="entry name" value="Histone-fold"/>
    <property type="match status" value="1"/>
</dbReference>
<dbReference type="PROSITE" id="PS00322">
    <property type="entry name" value="HISTONE_H3_1"/>
    <property type="match status" value="1"/>
</dbReference>
<dbReference type="PROSITE" id="PS00959">
    <property type="entry name" value="HISTONE_H3_2"/>
    <property type="match status" value="1"/>
</dbReference>